<protein>
    <recommendedName>
        <fullName>Inter-alpha-trypsin inhibitor heavy chain H3</fullName>
        <shortName>ITI heavy chain H3</shortName>
        <shortName>ITI-HC3</shortName>
        <shortName>Inter-alpha-inhibitor heavy chain 3</shortName>
    </recommendedName>
</protein>
<organism>
    <name type="scientific">Bos taurus</name>
    <name type="common">Bovine</name>
    <dbReference type="NCBI Taxonomy" id="9913"/>
    <lineage>
        <taxon>Eukaryota</taxon>
        <taxon>Metazoa</taxon>
        <taxon>Chordata</taxon>
        <taxon>Craniata</taxon>
        <taxon>Vertebrata</taxon>
        <taxon>Euteleostomi</taxon>
        <taxon>Mammalia</taxon>
        <taxon>Eutheria</taxon>
        <taxon>Laurasiatheria</taxon>
        <taxon>Artiodactyla</taxon>
        <taxon>Ruminantia</taxon>
        <taxon>Pecora</taxon>
        <taxon>Bovidae</taxon>
        <taxon>Bovinae</taxon>
        <taxon>Bos</taxon>
    </lineage>
</organism>
<comment type="function">
    <text evidence="1">May act as a carrier of hyaluronan in serum or as a binding protein between hyaluronan and other matrix protein, including those on cell surfaces in tissues to regulate the localization, synthesis and degradation of hyaluronan which are essential to cells undergoing biological processes.</text>
</comment>
<comment type="subunit">
    <text evidence="1">I-alpha-I plasma protease inhibitors are assembled from one or two heavy chains (H1, H2 or H3) and one light chain, bikunin. Inter-alpha-inhibitor (I-alpha-I) is composed of H1, H2 and bikunin, inter-alpha-like inhibitor (I-alpha-LI) of H2 and bikunin, and pre-alpha-inhibitor (P-alpha-I) of H3 and bikunin (By similarity).</text>
</comment>
<comment type="subcellular location">
    <subcellularLocation>
        <location>Secreted</location>
    </subcellularLocation>
</comment>
<comment type="similarity">
    <text evidence="5">Belongs to the ITIH family.</text>
</comment>
<accession>P56652</accession>
<accession>A7MB92</accession>
<accession>Q0V8M9</accession>
<keyword id="KW-0903">Direct protein sequencing</keyword>
<keyword id="KW-0325">Glycoprotein</keyword>
<keyword id="KW-0646">Protease inhibitor</keyword>
<keyword id="KW-0654">Proteoglycan</keyword>
<keyword id="KW-1185">Reference proteome</keyword>
<keyword id="KW-0964">Secreted</keyword>
<keyword id="KW-0722">Serine protease inhibitor</keyword>
<keyword id="KW-0732">Signal</keyword>
<reference key="1">
    <citation type="submission" date="2007-07" db="EMBL/GenBank/DDBJ databases">
        <authorList>
            <consortium name="NIH - Mammalian Gene Collection (MGC) project"/>
        </authorList>
    </citation>
    <scope>NUCLEOTIDE SEQUENCE [LARGE SCALE MRNA]</scope>
    <source>
        <strain>Hereford</strain>
        <tissue>Testis</tissue>
    </source>
</reference>
<reference key="2">
    <citation type="journal article" date="2005" name="BMC Genomics">
        <title>Characterization of 954 bovine full-CDS cDNA sequences.</title>
        <authorList>
            <person name="Harhay G.P."/>
            <person name="Sonstegard T.S."/>
            <person name="Keele J.W."/>
            <person name="Heaton M.P."/>
            <person name="Clawson M.L."/>
            <person name="Snelling W.M."/>
            <person name="Wiedmann R.T."/>
            <person name="Van Tassell C.P."/>
            <person name="Smith T.P.L."/>
        </authorList>
    </citation>
    <scope>NUCLEOTIDE SEQUENCE [LARGE SCALE MRNA] OF 3-891</scope>
</reference>
<reference key="3">
    <citation type="journal article" date="1993" name="J. Biol. Chem.">
        <title>A serum-derived hyaluronan-associated protein (SHAP) is the heavy chain of the inter alpha-trypsin inhibitor.</title>
        <authorList>
            <person name="Huang L."/>
            <person name="Yoneda M."/>
            <person name="Kimata K."/>
        </authorList>
    </citation>
    <scope>PROTEIN SEQUENCE OF 201-229</scope>
    <source>
        <tissue>Serum</tissue>
    </source>
</reference>
<proteinExistence type="evidence at protein level"/>
<sequence length="891" mass="99551">MALAQWPYLILALLSGLAVSGFPRNPSLLLGKRSLPGRAVDGIEVYSTKVNCKVTSRFAHNVVTTRAVNHANTAKEVSFDVELPKTAFITNFTLTIDGVTYPGKVKEKEVAKKQYEKAVSQGKTAGLVKASGRKLEKFTVSVNVAAGSKVTFELTYEELLKRHKGKYEMYLKVQPKQLVKHFEITVDIFEPQGISTLDAEASFITNDLLGSALTKSFSGKKGHVSFKPSLDQQRSCPTCTDSLLKGDFIITYDVNRESPANVQIVNGYFVHFFAPQGLPVVPKSVVFVIDVSGSMHGRKMEQTKDALLKILEDVKQDDYLNFILFSGDVTTWKDSLVPATPENIQEASKFVMDIQDRGMTNINDALLRGISMLNKAREEHTVPERSTSIIIMLTDGDANVGESRPEKIQENVRNAIGGKFPLYNLGFGNNLNYNFLENMALENHGLARRIYEDSDANLQLQGFYEEVANPLLTGVEVEYPQNAILDLTQNSYQHFYDGSEIVVAGRLADEDMNSFKAAVKGHGAINDLTFTEEVDMKEMEKALQERDYIFGDYIERLWAYLTIEQLLDKRKNAQGEEKEILTAQALELSLKYHFVTPLTSMVVTKPEDNENQTAIANKPGEGPLDAEEVPSMAYLTSYQAPQTPYYYVDGDPHFIIQIPEKDDAICFNIDEDPGTVLRLIQDPVTGLTVNGQIIGEKTGRSDSQTRRTYFGKLGIASAQMDFRIEVTRENITLWNGDSLSTFSWLDTVMVTQDGLSVMINRKKNMVVSFGDGVTFVVVLHQVWKKEPAHHDFLGFYVVNSRGMSAQTHGLLGQFFHPFDFQVSDVHPGSDPTKPDATMVVKNHQLTVTRGSQKDYRKDISVGRNVACWFVHNNGQGLIDGIHRDYIVPNLF</sequence>
<dbReference type="EMBL" id="BC151419">
    <property type="protein sequence ID" value="AAI51420.1"/>
    <property type="molecule type" value="mRNA"/>
</dbReference>
<dbReference type="EMBL" id="BT026189">
    <property type="protein sequence ID" value="ABG67028.1"/>
    <property type="molecule type" value="mRNA"/>
</dbReference>
<dbReference type="RefSeq" id="NP_001095368.1">
    <property type="nucleotide sequence ID" value="NM_001101898.2"/>
</dbReference>
<dbReference type="SMR" id="P56652"/>
<dbReference type="FunCoup" id="P56652">
    <property type="interactions" value="93"/>
</dbReference>
<dbReference type="STRING" id="9913.ENSBTAP00000010322"/>
<dbReference type="GlyCosmos" id="P56652">
    <property type="glycosylation" value="1 site, No reported glycans"/>
</dbReference>
<dbReference type="GlyGen" id="P56652">
    <property type="glycosylation" value="1 site"/>
</dbReference>
<dbReference type="PaxDb" id="9913-ENSBTAP00000010322"/>
<dbReference type="Ensembl" id="ENSBTAT00000010322.6">
    <property type="protein sequence ID" value="ENSBTAP00000010322.5"/>
    <property type="gene ID" value="ENSBTAG00000007846.7"/>
</dbReference>
<dbReference type="GeneID" id="508355"/>
<dbReference type="KEGG" id="bta:508355"/>
<dbReference type="CTD" id="3699"/>
<dbReference type="VEuPathDB" id="HostDB:ENSBTAG00000007846"/>
<dbReference type="VGNC" id="VGNC:30335">
    <property type="gene designation" value="ITIH3"/>
</dbReference>
<dbReference type="eggNOG" id="ENOG502QPS2">
    <property type="taxonomic scope" value="Eukaryota"/>
</dbReference>
<dbReference type="GeneTree" id="ENSGT00940000154554"/>
<dbReference type="HOGENOM" id="CLU_008101_0_0_1"/>
<dbReference type="InParanoid" id="P56652"/>
<dbReference type="OMA" id="EFIYWIN"/>
<dbReference type="OrthoDB" id="299997at2759"/>
<dbReference type="TreeFam" id="TF328982"/>
<dbReference type="Reactome" id="R-BTA-114608">
    <property type="pathway name" value="Platelet degranulation"/>
</dbReference>
<dbReference type="Proteomes" id="UP000009136">
    <property type="component" value="Chromosome 22"/>
</dbReference>
<dbReference type="Bgee" id="ENSBTAG00000007846">
    <property type="expression patterns" value="Expressed in liver and 28 other cell types or tissues"/>
</dbReference>
<dbReference type="GO" id="GO:0005576">
    <property type="term" value="C:extracellular region"/>
    <property type="evidence" value="ECO:0007669"/>
    <property type="project" value="UniProtKB-SubCell"/>
</dbReference>
<dbReference type="GO" id="GO:0004867">
    <property type="term" value="F:serine-type endopeptidase inhibitor activity"/>
    <property type="evidence" value="ECO:0007669"/>
    <property type="project" value="UniProtKB-KW"/>
</dbReference>
<dbReference type="GO" id="GO:0030212">
    <property type="term" value="P:hyaluronan metabolic process"/>
    <property type="evidence" value="ECO:0007669"/>
    <property type="project" value="InterPro"/>
</dbReference>
<dbReference type="CDD" id="cd01461">
    <property type="entry name" value="vWA_interalpha_trypsin_inhibitor"/>
    <property type="match status" value="1"/>
</dbReference>
<dbReference type="FunFam" id="3.40.50.410:FF:000013">
    <property type="entry name" value="inter-alpha-trypsin inhibitor heavy chain H2"/>
    <property type="match status" value="1"/>
</dbReference>
<dbReference type="Gene3D" id="3.40.50.410">
    <property type="entry name" value="von Willebrand factor, type A domain"/>
    <property type="match status" value="1"/>
</dbReference>
<dbReference type="InterPro" id="IPR010600">
    <property type="entry name" value="ITI_HC_C"/>
</dbReference>
<dbReference type="InterPro" id="IPR050934">
    <property type="entry name" value="ITIH"/>
</dbReference>
<dbReference type="InterPro" id="IPR013694">
    <property type="entry name" value="VIT"/>
</dbReference>
<dbReference type="InterPro" id="IPR002035">
    <property type="entry name" value="VWF_A"/>
</dbReference>
<dbReference type="InterPro" id="IPR036465">
    <property type="entry name" value="vWFA_dom_sf"/>
</dbReference>
<dbReference type="PANTHER" id="PTHR10338">
    <property type="entry name" value="INTER-ALPHA-TRYPSIN INHIBITOR HEAVY CHAIN FAMILY MEMBER"/>
    <property type="match status" value="1"/>
</dbReference>
<dbReference type="PANTHER" id="PTHR10338:SF115">
    <property type="entry name" value="INTER-ALPHA-TRYPSIN INHIBITOR HEAVY CHAIN H3"/>
    <property type="match status" value="1"/>
</dbReference>
<dbReference type="Pfam" id="PF06668">
    <property type="entry name" value="ITI_HC_C"/>
    <property type="match status" value="1"/>
</dbReference>
<dbReference type="Pfam" id="PF08487">
    <property type="entry name" value="VIT"/>
    <property type="match status" value="1"/>
</dbReference>
<dbReference type="Pfam" id="PF00092">
    <property type="entry name" value="VWA"/>
    <property type="match status" value="1"/>
</dbReference>
<dbReference type="SMART" id="SM00609">
    <property type="entry name" value="VIT"/>
    <property type="match status" value="1"/>
</dbReference>
<dbReference type="SMART" id="SM00327">
    <property type="entry name" value="VWA"/>
    <property type="match status" value="1"/>
</dbReference>
<dbReference type="SUPFAM" id="SSF53300">
    <property type="entry name" value="vWA-like"/>
    <property type="match status" value="1"/>
</dbReference>
<dbReference type="PROSITE" id="PS51468">
    <property type="entry name" value="VIT"/>
    <property type="match status" value="1"/>
</dbReference>
<dbReference type="PROSITE" id="PS50234">
    <property type="entry name" value="VWFA"/>
    <property type="match status" value="1"/>
</dbReference>
<gene>
    <name type="primary">ITIH3</name>
</gene>
<evidence type="ECO:0000250" key="1"/>
<evidence type="ECO:0000255" key="2"/>
<evidence type="ECO:0000255" key="3">
    <source>
        <dbReference type="PROSITE-ProRule" id="PRU00219"/>
    </source>
</evidence>
<evidence type="ECO:0000255" key="4">
    <source>
        <dbReference type="PROSITE-ProRule" id="PRU00801"/>
    </source>
</evidence>
<evidence type="ECO:0000305" key="5"/>
<name>ITIH3_BOVIN</name>
<feature type="signal peptide" evidence="2">
    <location>
        <begin position="1"/>
        <end position="20"/>
    </location>
</feature>
<feature type="propeptide" id="PRO_0000312437" evidence="1">
    <location>
        <begin position="21"/>
        <end position="34"/>
    </location>
</feature>
<feature type="chain" id="PRO_0000140900" description="Inter-alpha-trypsin inhibitor heavy chain H3">
    <location>
        <begin position="35"/>
        <end position="651"/>
    </location>
</feature>
<feature type="propeptide" id="PRO_0000312438" evidence="1">
    <location>
        <begin position="652"/>
        <end position="891"/>
    </location>
</feature>
<feature type="domain" description="VIT" evidence="4">
    <location>
        <begin position="29"/>
        <end position="158"/>
    </location>
</feature>
<feature type="domain" description="VWFA" evidence="3">
    <location>
        <begin position="284"/>
        <end position="467"/>
    </location>
</feature>
<feature type="modified residue" description="Aspartate 1-(chondroitin 4-sulfate)-ester" evidence="1">
    <location>
        <position position="651"/>
    </location>
</feature>
<feature type="glycosylation site" description="N-linked (GlcNAc...) asparagine" evidence="2">
    <location>
        <position position="91"/>
    </location>
</feature>
<feature type="sequence conflict" description="In Ref. 2; ABG67028." evidence="5" ref="2">
    <original>R</original>
    <variation>G</variation>
    <location>
        <position position="38"/>
    </location>
</feature>
<feature type="sequence conflict" description="In Ref. 3; AA sequence." evidence="5" ref="3">
    <original>S</original>
    <variation>N</variation>
    <location>
        <position position="218"/>
    </location>
</feature>
<feature type="sequence conflict" description="In Ref. 3; AA sequence." evidence="5" ref="3">
    <original>S</original>
    <variation>F</variation>
    <location>
        <position position="225"/>
    </location>
</feature>
<feature type="sequence conflict" description="In Ref. 3; AA sequence." evidence="5" ref="3">
    <original>PS</original>
    <variation>VV</variation>
    <location>
        <begin position="228"/>
        <end position="229"/>
    </location>
</feature>
<feature type="sequence conflict" description="In Ref. 2; ABG67028." evidence="5" ref="2">
    <original>E</original>
    <variation>K</variation>
    <location>
        <position position="532"/>
    </location>
</feature>